<feature type="chain" id="PRO_0000082077" description="ATP synthase subunit a">
    <location>
        <begin position="1"/>
        <end position="270"/>
    </location>
</feature>
<feature type="transmembrane region" description="Helical" evidence="1">
    <location>
        <begin position="38"/>
        <end position="58"/>
    </location>
</feature>
<feature type="transmembrane region" description="Helical" evidence="1">
    <location>
        <begin position="98"/>
        <end position="118"/>
    </location>
</feature>
<feature type="transmembrane region" description="Helical" evidence="1">
    <location>
        <begin position="143"/>
        <end position="163"/>
    </location>
</feature>
<feature type="transmembrane region" description="Helical" evidence="1">
    <location>
        <begin position="208"/>
        <end position="228"/>
    </location>
</feature>
<feature type="transmembrane region" description="Helical" evidence="1">
    <location>
        <begin position="239"/>
        <end position="259"/>
    </location>
</feature>
<accession>P12984</accession>
<gene>
    <name evidence="1" type="primary">atpB</name>
    <name type="synonym">uncB</name>
</gene>
<evidence type="ECO:0000255" key="1">
    <source>
        <dbReference type="HAMAP-Rule" id="MF_01393"/>
    </source>
</evidence>
<keyword id="KW-0066">ATP synthesis</keyword>
<keyword id="KW-0997">Cell inner membrane</keyword>
<keyword id="KW-1003">Cell membrane</keyword>
<keyword id="KW-0138">CF(0)</keyword>
<keyword id="KW-0375">Hydrogen ion transport</keyword>
<keyword id="KW-0406">Ion transport</keyword>
<keyword id="KW-0472">Membrane</keyword>
<keyword id="KW-0812">Transmembrane</keyword>
<keyword id="KW-1133">Transmembrane helix</keyword>
<keyword id="KW-0813">Transport</keyword>
<proteinExistence type="inferred from homology"/>
<comment type="function">
    <text evidence="1">Key component of the proton channel; it plays a direct role in the translocation of protons across the membrane.</text>
</comment>
<comment type="subunit">
    <text evidence="1">F-type ATPases have 2 components, CF(1) - the catalytic core - and CF(0) - the membrane proton channel. CF(1) has five subunits: alpha(3), beta(3), gamma(1), delta(1), epsilon(1). CF(0) has three main subunits: a(1), b(2) and c(9-12). The alpha and beta chains form an alternating ring which encloses part of the gamma chain. CF(1) is attached to CF(0) by a central stalk formed by the gamma and epsilon chains, while a peripheral stalk is formed by the delta and b chains.</text>
</comment>
<comment type="subcellular location">
    <subcellularLocation>
        <location evidence="1">Cell inner membrane</location>
        <topology evidence="1">Multi-pass membrane protein</topology>
    </subcellularLocation>
</comment>
<comment type="similarity">
    <text evidence="1">Belongs to the ATPase A chain family.</text>
</comment>
<reference key="1">
    <citation type="journal article" date="1989" name="Nucleic Acids Res.">
        <title>Nucleotide sequence of the unc operon of Vibrio alginolyticus.</title>
        <authorList>
            <person name="Krumholz L.R."/>
            <person name="Esser U."/>
            <person name="Simoni R.D."/>
        </authorList>
    </citation>
    <scope>NUCLEOTIDE SEQUENCE [GENOMIC DNA]</scope>
    <source>
        <strain>138-2</strain>
    </source>
</reference>
<reference key="2">
    <citation type="journal article" date="1990" name="J. Bacteriol.">
        <title>Characterization of the H(+)-pumping F1F0 ATPase of Vibrio alginolyticus.</title>
        <authorList>
            <person name="Krumholz L.R."/>
            <person name="Esser U."/>
            <person name="Simoni R.D."/>
        </authorList>
    </citation>
    <scope>SIMILARITY TO OTHER A SUBUNITS</scope>
</reference>
<organism>
    <name type="scientific">Vibrio alginolyticus</name>
    <dbReference type="NCBI Taxonomy" id="663"/>
    <lineage>
        <taxon>Bacteria</taxon>
        <taxon>Pseudomonadati</taxon>
        <taxon>Pseudomonadota</taxon>
        <taxon>Gammaproteobacteria</taxon>
        <taxon>Vibrionales</taxon>
        <taxon>Vibrionaceae</taxon>
        <taxon>Vibrio</taxon>
    </lineage>
</organism>
<name>ATP6_VIBAL</name>
<dbReference type="EMBL" id="X16050">
    <property type="protein sequence ID" value="CAA34175.1"/>
    <property type="molecule type" value="Genomic_DNA"/>
</dbReference>
<dbReference type="PIR" id="S06076">
    <property type="entry name" value="S06076"/>
</dbReference>
<dbReference type="RefSeq" id="WP_005378922.1">
    <property type="nucleotide sequence ID" value="NZ_WAHT01000005.1"/>
</dbReference>
<dbReference type="SMR" id="P12984"/>
<dbReference type="STRING" id="663.BAU10_15110"/>
<dbReference type="GeneID" id="75169252"/>
<dbReference type="eggNOG" id="COG0356">
    <property type="taxonomic scope" value="Bacteria"/>
</dbReference>
<dbReference type="OrthoDB" id="9789241at2"/>
<dbReference type="BRENDA" id="7.1.2.2">
    <property type="organism ID" value="6624"/>
</dbReference>
<dbReference type="GO" id="GO:0005886">
    <property type="term" value="C:plasma membrane"/>
    <property type="evidence" value="ECO:0007669"/>
    <property type="project" value="UniProtKB-SubCell"/>
</dbReference>
<dbReference type="GO" id="GO:0045259">
    <property type="term" value="C:proton-transporting ATP synthase complex"/>
    <property type="evidence" value="ECO:0007669"/>
    <property type="project" value="UniProtKB-KW"/>
</dbReference>
<dbReference type="GO" id="GO:0046933">
    <property type="term" value="F:proton-transporting ATP synthase activity, rotational mechanism"/>
    <property type="evidence" value="ECO:0007669"/>
    <property type="project" value="UniProtKB-UniRule"/>
</dbReference>
<dbReference type="GO" id="GO:0042777">
    <property type="term" value="P:proton motive force-driven plasma membrane ATP synthesis"/>
    <property type="evidence" value="ECO:0007669"/>
    <property type="project" value="TreeGrafter"/>
</dbReference>
<dbReference type="CDD" id="cd00310">
    <property type="entry name" value="ATP-synt_Fo_a_6"/>
    <property type="match status" value="1"/>
</dbReference>
<dbReference type="FunFam" id="1.20.120.220:FF:000002">
    <property type="entry name" value="ATP synthase subunit a"/>
    <property type="match status" value="1"/>
</dbReference>
<dbReference type="Gene3D" id="1.20.120.220">
    <property type="entry name" value="ATP synthase, F0 complex, subunit A"/>
    <property type="match status" value="1"/>
</dbReference>
<dbReference type="HAMAP" id="MF_01393">
    <property type="entry name" value="ATP_synth_a_bact"/>
    <property type="match status" value="1"/>
</dbReference>
<dbReference type="InterPro" id="IPR045082">
    <property type="entry name" value="ATP_syn_F0_a_bact/chloroplast"/>
</dbReference>
<dbReference type="InterPro" id="IPR000568">
    <property type="entry name" value="ATP_synth_F0_asu"/>
</dbReference>
<dbReference type="InterPro" id="IPR023011">
    <property type="entry name" value="ATP_synth_F0_asu_AS"/>
</dbReference>
<dbReference type="InterPro" id="IPR035908">
    <property type="entry name" value="F0_ATP_A_sf"/>
</dbReference>
<dbReference type="NCBIfam" id="TIGR01131">
    <property type="entry name" value="ATP_synt_6_or_A"/>
    <property type="match status" value="1"/>
</dbReference>
<dbReference type="NCBIfam" id="NF004477">
    <property type="entry name" value="PRK05815.1-1"/>
    <property type="match status" value="1"/>
</dbReference>
<dbReference type="PANTHER" id="PTHR42823">
    <property type="entry name" value="ATP SYNTHASE SUBUNIT A, CHLOROPLASTIC"/>
    <property type="match status" value="1"/>
</dbReference>
<dbReference type="PANTHER" id="PTHR42823:SF3">
    <property type="entry name" value="ATP SYNTHASE SUBUNIT A, CHLOROPLASTIC"/>
    <property type="match status" value="1"/>
</dbReference>
<dbReference type="Pfam" id="PF00119">
    <property type="entry name" value="ATP-synt_A"/>
    <property type="match status" value="1"/>
</dbReference>
<dbReference type="PRINTS" id="PR00123">
    <property type="entry name" value="ATPASEA"/>
</dbReference>
<dbReference type="SUPFAM" id="SSF81336">
    <property type="entry name" value="F1F0 ATP synthase subunit A"/>
    <property type="match status" value="1"/>
</dbReference>
<dbReference type="PROSITE" id="PS00449">
    <property type="entry name" value="ATPASE_A"/>
    <property type="match status" value="1"/>
</dbReference>
<sequence length="270" mass="30134">MAAPGEALTSSGYIAHHLSNLSLYKLGLVGSETSFWNVHIDSLFFSWFTGLIFLGIFYKVAKRTTAGVPGKLQCAVEMIVEFVADNVKDTFHGRNPLIAPLALTIFCWVFLMNVMDLVPIDFLPYPAEHWLGIPYLKVVPSADVNITMAMALGVFALMIYYSIKVKGLGGFAKELALHPFNHPLMIPFNLLIEVVSLLAKPLSLGMRLFGNMFAGEVVFILCAAMLPWYLQWMGSLPWAIFHILVITIQAFVFMMLTIVYLSMAHEDPDH</sequence>
<protein>
    <recommendedName>
        <fullName evidence="1">ATP synthase subunit a</fullName>
    </recommendedName>
    <alternativeName>
        <fullName evidence="1">ATP synthase F0 sector subunit a</fullName>
    </alternativeName>
    <alternativeName>
        <fullName evidence="1">F-ATPase subunit 6</fullName>
    </alternativeName>
</protein>